<reference key="1">
    <citation type="journal article" date="2010" name="Nat. Biotechnol.">
        <title>Draft genome sequence of the oilseed species Ricinus communis.</title>
        <authorList>
            <person name="Chan A.P."/>
            <person name="Crabtree J."/>
            <person name="Zhao Q."/>
            <person name="Lorenzi H."/>
            <person name="Orvis J."/>
            <person name="Puiu D."/>
            <person name="Melake-Berhan A."/>
            <person name="Jones K.M."/>
            <person name="Redman J."/>
            <person name="Chen G."/>
            <person name="Cahoon E.B."/>
            <person name="Gedil M."/>
            <person name="Stanke M."/>
            <person name="Haas B.J."/>
            <person name="Wortman J.R."/>
            <person name="Fraser-Liggett C.M."/>
            <person name="Ravel J."/>
            <person name="Rabinowicz P.D."/>
        </authorList>
    </citation>
    <scope>NUCLEOTIDE SEQUENCE [LARGE SCALE GENOMIC DNA]</scope>
    <source>
        <strain>cv. Hale</strain>
    </source>
</reference>
<proteinExistence type="inferred from homology"/>
<evidence type="ECO:0000255" key="1">
    <source>
        <dbReference type="HAMAP-Rule" id="MF_03135"/>
    </source>
</evidence>
<organism>
    <name type="scientific">Ricinus communis</name>
    <name type="common">Castor bean</name>
    <dbReference type="NCBI Taxonomy" id="3988"/>
    <lineage>
        <taxon>Eukaryota</taxon>
        <taxon>Viridiplantae</taxon>
        <taxon>Streptophyta</taxon>
        <taxon>Embryophyta</taxon>
        <taxon>Tracheophyta</taxon>
        <taxon>Spermatophyta</taxon>
        <taxon>Magnoliopsida</taxon>
        <taxon>eudicotyledons</taxon>
        <taxon>Gunneridae</taxon>
        <taxon>Pentapetalae</taxon>
        <taxon>rosids</taxon>
        <taxon>fabids</taxon>
        <taxon>Malpighiales</taxon>
        <taxon>Euphorbiaceae</taxon>
        <taxon>Acalyphoideae</taxon>
        <taxon>Acalypheae</taxon>
        <taxon>Ricinus</taxon>
    </lineage>
</organism>
<sequence>MALYRTARRPLQMMLFSRLGNPEQNYSSWARKDASQSAFGMFVRLFSAHAPAAAEQMSLIKQLRERTSAPIKDVKASLVDCNWDIEAAQKDLRKRGKVLASKKSGRAATEGLLALAQNEGKAALIELNCETDFVARNDIFQCLALSLAKQALLTENTAQQASGIHPVGPECLEDLMINLEHPKISGETTVQNAITEVAAMMGENVKLRRGFVMSTSLPGVLSTYLHTSPQPGLGRIAGLLSLEIEDGNSQLDVLHHVGSELAMHVVAAKPLFLTKELVSSDALESEREILKSQAESTGKSQMAIEKMVEGRLRKYYEEVVLMEQKFIINDAVNVKTVLNNLSKEVGSPVKIGSFFRMEVGEGIQRLEATSADEPVAQAA</sequence>
<keyword id="KW-0251">Elongation factor</keyword>
<keyword id="KW-0496">Mitochondrion</keyword>
<keyword id="KW-0648">Protein biosynthesis</keyword>
<keyword id="KW-1185">Reference proteome</keyword>
<keyword id="KW-0809">Transit peptide</keyword>
<dbReference type="EMBL" id="EQ973941">
    <property type="protein sequence ID" value="EEF37773.1"/>
    <property type="molecule type" value="Genomic_DNA"/>
</dbReference>
<dbReference type="SMR" id="B9SEZ6"/>
<dbReference type="FunCoup" id="B9SEZ6">
    <property type="interactions" value="2654"/>
</dbReference>
<dbReference type="STRING" id="3988.B9SEZ6"/>
<dbReference type="GeneID" id="8288301"/>
<dbReference type="KEGG" id="rcu:8288301"/>
<dbReference type="eggNOG" id="KOG1071">
    <property type="taxonomic scope" value="Eukaryota"/>
</dbReference>
<dbReference type="InParanoid" id="B9SEZ6"/>
<dbReference type="OMA" id="QEYMLDD"/>
<dbReference type="OrthoDB" id="277235at2759"/>
<dbReference type="Proteomes" id="UP000008311">
    <property type="component" value="Unassembled WGS sequence"/>
</dbReference>
<dbReference type="GO" id="GO:0005739">
    <property type="term" value="C:mitochondrion"/>
    <property type="evidence" value="ECO:0007669"/>
    <property type="project" value="UniProtKB-SubCell"/>
</dbReference>
<dbReference type="GO" id="GO:0003746">
    <property type="term" value="F:translation elongation factor activity"/>
    <property type="evidence" value="ECO:0000318"/>
    <property type="project" value="GO_Central"/>
</dbReference>
<dbReference type="GO" id="GO:0070125">
    <property type="term" value="P:mitochondrial translational elongation"/>
    <property type="evidence" value="ECO:0000318"/>
    <property type="project" value="GO_Central"/>
</dbReference>
<dbReference type="CDD" id="cd14275">
    <property type="entry name" value="UBA_EF-Ts"/>
    <property type="match status" value="1"/>
</dbReference>
<dbReference type="FunFam" id="1.10.286.20:FF:000001">
    <property type="entry name" value="Elongation factor Ts"/>
    <property type="match status" value="1"/>
</dbReference>
<dbReference type="FunFam" id="1.10.8.10:FF:000001">
    <property type="entry name" value="Elongation factor Ts"/>
    <property type="match status" value="1"/>
</dbReference>
<dbReference type="FunFam" id="3.30.479.20:FF:000012">
    <property type="entry name" value="Elongation factor Ts, mitochondrial"/>
    <property type="match status" value="1"/>
</dbReference>
<dbReference type="Gene3D" id="1.10.286.20">
    <property type="match status" value="1"/>
</dbReference>
<dbReference type="Gene3D" id="1.10.8.10">
    <property type="entry name" value="DNA helicase RuvA subunit, C-terminal domain"/>
    <property type="match status" value="1"/>
</dbReference>
<dbReference type="Gene3D" id="3.30.479.20">
    <property type="entry name" value="Elongation factor Ts, dimerisation domain"/>
    <property type="match status" value="2"/>
</dbReference>
<dbReference type="HAMAP" id="MF_00050">
    <property type="entry name" value="EF_Ts"/>
    <property type="match status" value="1"/>
</dbReference>
<dbReference type="InterPro" id="IPR036402">
    <property type="entry name" value="EF-Ts_dimer_sf"/>
</dbReference>
<dbReference type="InterPro" id="IPR001816">
    <property type="entry name" value="Transl_elong_EFTs/EF1B"/>
</dbReference>
<dbReference type="InterPro" id="IPR014039">
    <property type="entry name" value="Transl_elong_EFTs/EF1B_dimer"/>
</dbReference>
<dbReference type="InterPro" id="IPR018101">
    <property type="entry name" value="Transl_elong_Ts_CS"/>
</dbReference>
<dbReference type="InterPro" id="IPR009060">
    <property type="entry name" value="UBA-like_sf"/>
</dbReference>
<dbReference type="NCBIfam" id="TIGR00116">
    <property type="entry name" value="tsf"/>
    <property type="match status" value="1"/>
</dbReference>
<dbReference type="PANTHER" id="PTHR11741">
    <property type="entry name" value="ELONGATION FACTOR TS"/>
    <property type="match status" value="1"/>
</dbReference>
<dbReference type="PANTHER" id="PTHR11741:SF0">
    <property type="entry name" value="ELONGATION FACTOR TS, MITOCHONDRIAL"/>
    <property type="match status" value="1"/>
</dbReference>
<dbReference type="Pfam" id="PF00889">
    <property type="entry name" value="EF_TS"/>
    <property type="match status" value="1"/>
</dbReference>
<dbReference type="SUPFAM" id="SSF54713">
    <property type="entry name" value="Elongation factor Ts (EF-Ts), dimerisation domain"/>
    <property type="match status" value="2"/>
</dbReference>
<dbReference type="SUPFAM" id="SSF46934">
    <property type="entry name" value="UBA-like"/>
    <property type="match status" value="1"/>
</dbReference>
<dbReference type="PROSITE" id="PS01127">
    <property type="entry name" value="EF_TS_2"/>
    <property type="match status" value="1"/>
</dbReference>
<name>EFTS_RICCO</name>
<accession>B9SEZ6</accession>
<protein>
    <recommendedName>
        <fullName evidence="1">Elongation factor Ts, mitochondrial</fullName>
        <shortName evidence="1">EF-Ts</shortName>
        <shortName evidence="1">EF-TsMt</shortName>
    </recommendedName>
</protein>
<gene>
    <name evidence="1" type="primary">EFTS</name>
    <name type="ORF">RCOM_1211470</name>
</gene>
<feature type="transit peptide" description="Mitochondrion" evidence="1">
    <location>
        <begin position="1"/>
        <end position="45"/>
    </location>
</feature>
<feature type="chain" id="PRO_0000402329" description="Elongation factor Ts, mitochondrial">
    <location>
        <begin position="46"/>
        <end position="379"/>
    </location>
</feature>
<comment type="function">
    <text evidence="1">Associates with the EF-Tu.GDP complex and induces the exchange of GDP to GTP. It remains bound to the aminoacyl-tRNA.EF-Tu.GTP complex up to the GTP hydrolysis stage on the ribosome.</text>
</comment>
<comment type="subcellular location">
    <subcellularLocation>
        <location evidence="1">Mitochondrion</location>
    </subcellularLocation>
</comment>
<comment type="similarity">
    <text evidence="1">Belongs to the EF-Ts family.</text>
</comment>